<evidence type="ECO:0000255" key="1"/>
<evidence type="ECO:0000256" key="2">
    <source>
        <dbReference type="SAM" id="MobiDB-lite"/>
    </source>
</evidence>
<sequence length="195" mass="20580">MEEGLLEIMTKDGGDMPAPLEVSTVPAVGDVISGEYNGGMKELMEHLKAQLQALFEDVRAMRGALDEQASHIQVLSDDVCANQRAIVSMCQIMTTAPRQGGLGVVGNKGNFPGARRDPETPSPGIGDSGLLGRDPEDEEDDDEEEKEMPSSATPTSHCELPESPCAGLLGGDGPLVEPLDLPDITLLQLEGEASL</sequence>
<gene>
    <name type="primary">CCDC184</name>
</gene>
<keyword id="KW-0175">Coiled coil</keyword>
<keyword id="KW-1185">Reference proteome</keyword>
<protein>
    <recommendedName>
        <fullName>Coiled-coil domain-containing protein 184</fullName>
    </recommendedName>
</protein>
<feature type="chain" id="PRO_0000335680" description="Coiled-coil domain-containing protein 184">
    <location>
        <begin position="1"/>
        <end position="195"/>
    </location>
</feature>
<feature type="region of interest" description="Disordered" evidence="2">
    <location>
        <begin position="98"/>
        <end position="175"/>
    </location>
</feature>
<feature type="coiled-coil region" evidence="1">
    <location>
        <begin position="39"/>
        <end position="68"/>
    </location>
</feature>
<feature type="compositionally biased region" description="Acidic residues" evidence="2">
    <location>
        <begin position="135"/>
        <end position="146"/>
    </location>
</feature>
<reference key="1">
    <citation type="submission" date="2006-08" db="EMBL/GenBank/DDBJ databases">
        <authorList>
            <consortium name="NIH - Mammalian Gene Collection (MGC) project"/>
        </authorList>
    </citation>
    <scope>NUCLEOTIDE SEQUENCE [LARGE SCALE MRNA]</scope>
    <source>
        <strain>Hereford</strain>
        <tissue>Basal ganglia</tissue>
    </source>
</reference>
<accession>Q0VC19</accession>
<name>CC184_BOVIN</name>
<organism>
    <name type="scientific">Bos taurus</name>
    <name type="common">Bovine</name>
    <dbReference type="NCBI Taxonomy" id="9913"/>
    <lineage>
        <taxon>Eukaryota</taxon>
        <taxon>Metazoa</taxon>
        <taxon>Chordata</taxon>
        <taxon>Craniata</taxon>
        <taxon>Vertebrata</taxon>
        <taxon>Euteleostomi</taxon>
        <taxon>Mammalia</taxon>
        <taxon>Eutheria</taxon>
        <taxon>Laurasiatheria</taxon>
        <taxon>Artiodactyla</taxon>
        <taxon>Ruminantia</taxon>
        <taxon>Pecora</taxon>
        <taxon>Bovidae</taxon>
        <taxon>Bovinae</taxon>
        <taxon>Bos</taxon>
    </lineage>
</organism>
<proteinExistence type="evidence at transcript level"/>
<dbReference type="EMBL" id="BC120392">
    <property type="protein sequence ID" value="AAI20393.1"/>
    <property type="molecule type" value="mRNA"/>
</dbReference>
<dbReference type="RefSeq" id="NP_001071541.1">
    <property type="nucleotide sequence ID" value="NM_001078073.1"/>
</dbReference>
<dbReference type="FunCoup" id="Q0VC19">
    <property type="interactions" value="478"/>
</dbReference>
<dbReference type="STRING" id="9913.ENSBTAP00000003098"/>
<dbReference type="PaxDb" id="9913-ENSBTAP00000003098"/>
<dbReference type="Ensembl" id="ENSBTAT00000003098.5">
    <property type="protein sequence ID" value="ENSBTAP00000003098.3"/>
    <property type="gene ID" value="ENSBTAG00000002390.5"/>
</dbReference>
<dbReference type="GeneID" id="617289"/>
<dbReference type="KEGG" id="bta:617289"/>
<dbReference type="CTD" id="387856"/>
<dbReference type="VEuPathDB" id="HostDB:ENSBTAG00000002390"/>
<dbReference type="VGNC" id="VGNC:26879">
    <property type="gene designation" value="CCDC184"/>
</dbReference>
<dbReference type="eggNOG" id="ENOG502RNYW">
    <property type="taxonomic scope" value="Eukaryota"/>
</dbReference>
<dbReference type="GeneTree" id="ENSGT00390000002978"/>
<dbReference type="HOGENOM" id="CLU_125035_0_0_1"/>
<dbReference type="InParanoid" id="Q0VC19"/>
<dbReference type="OMA" id="KEWGCGS"/>
<dbReference type="OrthoDB" id="9607032at2759"/>
<dbReference type="TreeFam" id="TF337201"/>
<dbReference type="Proteomes" id="UP000009136">
    <property type="component" value="Chromosome 5"/>
</dbReference>
<dbReference type="Bgee" id="ENSBTAG00000002390">
    <property type="expression patterns" value="Expressed in retina and 68 other cell types or tissues"/>
</dbReference>
<dbReference type="GO" id="GO:0005737">
    <property type="term" value="C:cytoplasm"/>
    <property type="evidence" value="ECO:0000318"/>
    <property type="project" value="GO_Central"/>
</dbReference>
<dbReference type="InterPro" id="IPR031458">
    <property type="entry name" value="DUF4677"/>
</dbReference>
<dbReference type="PANTHER" id="PTHR31554">
    <property type="entry name" value="COILED-COIL DOMAIN-CONTAINING PROTEIN 184"/>
    <property type="match status" value="1"/>
</dbReference>
<dbReference type="PANTHER" id="PTHR31554:SF2">
    <property type="entry name" value="COILED-COIL DOMAIN-CONTAINING PROTEIN 184"/>
    <property type="match status" value="1"/>
</dbReference>
<dbReference type="Pfam" id="PF15726">
    <property type="entry name" value="DUF4677"/>
    <property type="match status" value="1"/>
</dbReference>